<accession>A5IK72</accession>
<gene>
    <name type="primary">aroE</name>
    <name type="ordered locus">Tpet_0574</name>
</gene>
<proteinExistence type="inferred from homology"/>
<name>AROE_THEP1</name>
<comment type="catalytic activity">
    <reaction>
        <text>shikimate + NADP(+) = 3-dehydroshikimate + NADPH + H(+)</text>
        <dbReference type="Rhea" id="RHEA:17737"/>
        <dbReference type="ChEBI" id="CHEBI:15378"/>
        <dbReference type="ChEBI" id="CHEBI:16630"/>
        <dbReference type="ChEBI" id="CHEBI:36208"/>
        <dbReference type="ChEBI" id="CHEBI:57783"/>
        <dbReference type="ChEBI" id="CHEBI:58349"/>
        <dbReference type="EC" id="1.1.1.25"/>
    </reaction>
</comment>
<comment type="pathway">
    <text>Metabolic intermediate biosynthesis; chorismate biosynthesis; chorismate from D-erythrose 4-phosphate and phosphoenolpyruvate: step 4/7.</text>
</comment>
<comment type="similarity">
    <text evidence="3">Belongs to the shikimate dehydrogenase family.</text>
</comment>
<reference key="1">
    <citation type="submission" date="2007-05" db="EMBL/GenBank/DDBJ databases">
        <title>Complete sequence of Thermotoga petrophila RKU-1.</title>
        <authorList>
            <consortium name="US DOE Joint Genome Institute"/>
            <person name="Copeland A."/>
            <person name="Lucas S."/>
            <person name="Lapidus A."/>
            <person name="Barry K."/>
            <person name="Glavina del Rio T."/>
            <person name="Dalin E."/>
            <person name="Tice H."/>
            <person name="Pitluck S."/>
            <person name="Sims D."/>
            <person name="Brettin T."/>
            <person name="Bruce D."/>
            <person name="Detter J.C."/>
            <person name="Han C."/>
            <person name="Tapia R."/>
            <person name="Schmutz J."/>
            <person name="Larimer F."/>
            <person name="Land M."/>
            <person name="Hauser L."/>
            <person name="Kyrpides N."/>
            <person name="Mikhailova N."/>
            <person name="Nelson K."/>
            <person name="Gogarten J.P."/>
            <person name="Noll K."/>
            <person name="Richardson P."/>
        </authorList>
    </citation>
    <scope>NUCLEOTIDE SEQUENCE [LARGE SCALE GENOMIC DNA]</scope>
    <source>
        <strain>ATCC BAA-488 / DSM 13995 / JCM 10881 / RKU-1</strain>
    </source>
</reference>
<protein>
    <recommendedName>
        <fullName>Shikimate dehydrogenase</fullName>
        <ecNumber>1.1.1.25</ecNumber>
    </recommendedName>
</protein>
<dbReference type="EC" id="1.1.1.25"/>
<dbReference type="EMBL" id="CP000702">
    <property type="protein sequence ID" value="ABQ46595.1"/>
    <property type="molecule type" value="Genomic_DNA"/>
</dbReference>
<dbReference type="RefSeq" id="WP_011943195.1">
    <property type="nucleotide sequence ID" value="NC_009486.1"/>
</dbReference>
<dbReference type="SMR" id="A5IK72"/>
<dbReference type="STRING" id="390874.Tpet_0574"/>
<dbReference type="KEGG" id="tpt:Tpet_0574"/>
<dbReference type="eggNOG" id="COG0169">
    <property type="taxonomic scope" value="Bacteria"/>
</dbReference>
<dbReference type="HOGENOM" id="CLU_044063_4_1_0"/>
<dbReference type="UniPathway" id="UPA00053">
    <property type="reaction ID" value="UER00087"/>
</dbReference>
<dbReference type="Proteomes" id="UP000006558">
    <property type="component" value="Chromosome"/>
</dbReference>
<dbReference type="GO" id="GO:0005829">
    <property type="term" value="C:cytosol"/>
    <property type="evidence" value="ECO:0007669"/>
    <property type="project" value="TreeGrafter"/>
</dbReference>
<dbReference type="GO" id="GO:0050661">
    <property type="term" value="F:NADP binding"/>
    <property type="evidence" value="ECO:0007669"/>
    <property type="project" value="TreeGrafter"/>
</dbReference>
<dbReference type="GO" id="GO:0004764">
    <property type="term" value="F:shikimate 3-dehydrogenase (NADP+) activity"/>
    <property type="evidence" value="ECO:0007669"/>
    <property type="project" value="UniProtKB-UniRule"/>
</dbReference>
<dbReference type="GO" id="GO:0008652">
    <property type="term" value="P:amino acid biosynthetic process"/>
    <property type="evidence" value="ECO:0007669"/>
    <property type="project" value="UniProtKB-KW"/>
</dbReference>
<dbReference type="GO" id="GO:0009073">
    <property type="term" value="P:aromatic amino acid family biosynthetic process"/>
    <property type="evidence" value="ECO:0007669"/>
    <property type="project" value="UniProtKB-KW"/>
</dbReference>
<dbReference type="GO" id="GO:0009423">
    <property type="term" value="P:chorismate biosynthetic process"/>
    <property type="evidence" value="ECO:0007669"/>
    <property type="project" value="UniProtKB-UniRule"/>
</dbReference>
<dbReference type="GO" id="GO:0019632">
    <property type="term" value="P:shikimate metabolic process"/>
    <property type="evidence" value="ECO:0007669"/>
    <property type="project" value="TreeGrafter"/>
</dbReference>
<dbReference type="CDD" id="cd01065">
    <property type="entry name" value="NAD_bind_Shikimate_DH"/>
    <property type="match status" value="1"/>
</dbReference>
<dbReference type="Gene3D" id="3.40.50.10860">
    <property type="entry name" value="Leucine Dehydrogenase, chain A, domain 1"/>
    <property type="match status" value="1"/>
</dbReference>
<dbReference type="Gene3D" id="3.40.50.720">
    <property type="entry name" value="NAD(P)-binding Rossmann-like Domain"/>
    <property type="match status" value="1"/>
</dbReference>
<dbReference type="InterPro" id="IPR046346">
    <property type="entry name" value="Aminoacid_DH-like_N_sf"/>
</dbReference>
<dbReference type="InterPro" id="IPR036291">
    <property type="entry name" value="NAD(P)-bd_dom_sf"/>
</dbReference>
<dbReference type="InterPro" id="IPR013708">
    <property type="entry name" value="Shikimate_DH-bd_N"/>
</dbReference>
<dbReference type="InterPro" id="IPR022893">
    <property type="entry name" value="Shikimate_DH_fam"/>
</dbReference>
<dbReference type="InterPro" id="IPR006151">
    <property type="entry name" value="Shikm_DH/Glu-tRNA_Rdtase"/>
</dbReference>
<dbReference type="PANTHER" id="PTHR21089:SF1">
    <property type="entry name" value="BIFUNCTIONAL 3-DEHYDROQUINATE DEHYDRATASE_SHIKIMATE DEHYDROGENASE, CHLOROPLASTIC"/>
    <property type="match status" value="1"/>
</dbReference>
<dbReference type="PANTHER" id="PTHR21089">
    <property type="entry name" value="SHIKIMATE DEHYDROGENASE"/>
    <property type="match status" value="1"/>
</dbReference>
<dbReference type="Pfam" id="PF01488">
    <property type="entry name" value="Shikimate_DH"/>
    <property type="match status" value="1"/>
</dbReference>
<dbReference type="Pfam" id="PF08501">
    <property type="entry name" value="Shikimate_dh_N"/>
    <property type="match status" value="1"/>
</dbReference>
<dbReference type="SUPFAM" id="SSF53223">
    <property type="entry name" value="Aminoacid dehydrogenase-like, N-terminal domain"/>
    <property type="match status" value="1"/>
</dbReference>
<dbReference type="SUPFAM" id="SSF51735">
    <property type="entry name" value="NAD(P)-binding Rossmann-fold domains"/>
    <property type="match status" value="1"/>
</dbReference>
<keyword id="KW-0028">Amino-acid biosynthesis</keyword>
<keyword id="KW-0057">Aromatic amino acid biosynthesis</keyword>
<keyword id="KW-0521">NADP</keyword>
<keyword id="KW-0560">Oxidoreductase</keyword>
<evidence type="ECO:0000250" key="1"/>
<evidence type="ECO:0000255" key="2"/>
<evidence type="ECO:0000305" key="3"/>
<feature type="chain" id="PRO_1000021356" description="Shikimate dehydrogenase">
    <location>
        <begin position="1"/>
        <end position="253"/>
    </location>
</feature>
<feature type="active site" description="Proton acceptor" evidence="2">
    <location>
        <position position="63"/>
    </location>
</feature>
<feature type="binding site" evidence="1">
    <location>
        <begin position="115"/>
        <end position="119"/>
    </location>
    <ligand>
        <name>NADP(+)</name>
        <dbReference type="ChEBI" id="CHEBI:58349"/>
    </ligand>
</feature>
<organism>
    <name type="scientific">Thermotoga petrophila (strain ATCC BAA-488 / DSM 13995 / JCM 10881 / RKU-1)</name>
    <dbReference type="NCBI Taxonomy" id="390874"/>
    <lineage>
        <taxon>Bacteria</taxon>
        <taxon>Thermotogati</taxon>
        <taxon>Thermotogota</taxon>
        <taxon>Thermotogae</taxon>
        <taxon>Thermotogales</taxon>
        <taxon>Thermotogaceae</taxon>
        <taxon>Thermotoga</taxon>
    </lineage>
</organism>
<sequence>MKFCIIGYPVSHSISPRLYNEYFKRAGMNHSYGMEEIPPESFDTEIRRILEEYDGFNATIPHKERVMRYVEPSEDAQRIKAVNCVFRGKGYNTDWVGVVKSLEGVEVKEPVVVVGAGGAARAVIYALLQMGVKDIWVVNRTIERAKALDFPVKIFSLDQLDEVVKKAKSLFNTTSVGMKGEKLTVSEASLKGLYLVYDVVYFETPLVSDAKRLGVEHVVKGNLMFYYQAMENLKIWGIYDERSFKEVFEEVLR</sequence>